<feature type="chain" id="PRO_1000045801" description="Adenosylcobinamide-GDP ribazoletransferase">
    <location>
        <begin position="1"/>
        <end position="260"/>
    </location>
</feature>
<feature type="transmembrane region" description="Helical" evidence="1">
    <location>
        <begin position="43"/>
        <end position="63"/>
    </location>
</feature>
<feature type="transmembrane region" description="Helical" evidence="1">
    <location>
        <begin position="64"/>
        <end position="84"/>
    </location>
</feature>
<feature type="transmembrane region" description="Helical" evidence="1">
    <location>
        <begin position="117"/>
        <end position="137"/>
    </location>
</feature>
<feature type="transmembrane region" description="Helical" evidence="1">
    <location>
        <begin position="143"/>
        <end position="163"/>
    </location>
</feature>
<feature type="transmembrane region" description="Helical" evidence="1">
    <location>
        <begin position="197"/>
        <end position="217"/>
    </location>
</feature>
<feature type="transmembrane region" description="Helical" evidence="1">
    <location>
        <begin position="237"/>
        <end position="257"/>
    </location>
</feature>
<comment type="function">
    <text evidence="1">Joins adenosylcobinamide-GDP and alpha-ribazole to generate adenosylcobalamin (Ado-cobalamin). Also synthesizes adenosylcobalamin 5'-phosphate from adenosylcobinamide-GDP and alpha-ribazole 5'-phosphate.</text>
</comment>
<comment type="catalytic activity">
    <reaction evidence="1">
        <text>alpha-ribazole + adenosylcob(III)inamide-GDP = adenosylcob(III)alamin + GMP + H(+)</text>
        <dbReference type="Rhea" id="RHEA:16049"/>
        <dbReference type="ChEBI" id="CHEBI:10329"/>
        <dbReference type="ChEBI" id="CHEBI:15378"/>
        <dbReference type="ChEBI" id="CHEBI:18408"/>
        <dbReference type="ChEBI" id="CHEBI:58115"/>
        <dbReference type="ChEBI" id="CHEBI:60487"/>
        <dbReference type="EC" id="2.7.8.26"/>
    </reaction>
</comment>
<comment type="catalytic activity">
    <reaction evidence="1">
        <text>alpha-ribazole 5'-phosphate + adenosylcob(III)inamide-GDP = adenosylcob(III)alamin 5'-phosphate + GMP + H(+)</text>
        <dbReference type="Rhea" id="RHEA:23560"/>
        <dbReference type="ChEBI" id="CHEBI:15378"/>
        <dbReference type="ChEBI" id="CHEBI:57918"/>
        <dbReference type="ChEBI" id="CHEBI:58115"/>
        <dbReference type="ChEBI" id="CHEBI:60487"/>
        <dbReference type="ChEBI" id="CHEBI:60493"/>
        <dbReference type="EC" id="2.7.8.26"/>
    </reaction>
</comment>
<comment type="cofactor">
    <cofactor evidence="1">
        <name>Mg(2+)</name>
        <dbReference type="ChEBI" id="CHEBI:18420"/>
    </cofactor>
</comment>
<comment type="pathway">
    <text evidence="1">Cofactor biosynthesis; adenosylcobalamin biosynthesis; adenosylcobalamin from cob(II)yrinate a,c-diamide: step 7/7.</text>
</comment>
<comment type="subcellular location">
    <subcellularLocation>
        <location evidence="1">Cell inner membrane</location>
        <topology evidence="1">Multi-pass membrane protein</topology>
    </subcellularLocation>
</comment>
<comment type="similarity">
    <text evidence="1">Belongs to the CobS family.</text>
</comment>
<gene>
    <name evidence="1" type="primary">cobS</name>
    <name type="ordered locus">Sama_0763</name>
</gene>
<reference key="1">
    <citation type="submission" date="2006-12" db="EMBL/GenBank/DDBJ databases">
        <title>Complete sequence of Shewanella amazonensis SB2B.</title>
        <authorList>
            <consortium name="US DOE Joint Genome Institute"/>
            <person name="Copeland A."/>
            <person name="Lucas S."/>
            <person name="Lapidus A."/>
            <person name="Barry K."/>
            <person name="Detter J.C."/>
            <person name="Glavina del Rio T."/>
            <person name="Hammon N."/>
            <person name="Israni S."/>
            <person name="Dalin E."/>
            <person name="Tice H."/>
            <person name="Pitluck S."/>
            <person name="Munk A.C."/>
            <person name="Brettin T."/>
            <person name="Bruce D."/>
            <person name="Han C."/>
            <person name="Tapia R."/>
            <person name="Gilna P."/>
            <person name="Schmutz J."/>
            <person name="Larimer F."/>
            <person name="Land M."/>
            <person name="Hauser L."/>
            <person name="Kyrpides N."/>
            <person name="Mikhailova N."/>
            <person name="Fredrickson J."/>
            <person name="Richardson P."/>
        </authorList>
    </citation>
    <scope>NUCLEOTIDE SEQUENCE [LARGE SCALE GENOMIC DNA]</scope>
    <source>
        <strain>ATCC BAA-1098 / SB2B</strain>
    </source>
</reference>
<keyword id="KW-0997">Cell inner membrane</keyword>
<keyword id="KW-1003">Cell membrane</keyword>
<keyword id="KW-0169">Cobalamin biosynthesis</keyword>
<keyword id="KW-0460">Magnesium</keyword>
<keyword id="KW-0472">Membrane</keyword>
<keyword id="KW-1185">Reference proteome</keyword>
<keyword id="KW-0808">Transferase</keyword>
<keyword id="KW-0812">Transmembrane</keyword>
<keyword id="KW-1133">Transmembrane helix</keyword>
<organism>
    <name type="scientific">Shewanella amazonensis (strain ATCC BAA-1098 / SB2B)</name>
    <dbReference type="NCBI Taxonomy" id="326297"/>
    <lineage>
        <taxon>Bacteria</taxon>
        <taxon>Pseudomonadati</taxon>
        <taxon>Pseudomonadota</taxon>
        <taxon>Gammaproteobacteria</taxon>
        <taxon>Alteromonadales</taxon>
        <taxon>Shewanellaceae</taxon>
        <taxon>Shewanella</taxon>
    </lineage>
</organism>
<evidence type="ECO:0000255" key="1">
    <source>
        <dbReference type="HAMAP-Rule" id="MF_00719"/>
    </source>
</evidence>
<protein>
    <recommendedName>
        <fullName evidence="1">Adenosylcobinamide-GDP ribazoletransferase</fullName>
        <ecNumber evidence="1">2.7.8.26</ecNumber>
    </recommendedName>
    <alternativeName>
        <fullName evidence="1">Cobalamin synthase</fullName>
    </alternativeName>
    <alternativeName>
        <fullName evidence="1">Cobalamin-5'-phosphate synthase</fullName>
    </alternativeName>
</protein>
<name>COBS_SHEAM</name>
<dbReference type="EC" id="2.7.8.26" evidence="1"/>
<dbReference type="EMBL" id="CP000507">
    <property type="protein sequence ID" value="ABL98970.1"/>
    <property type="molecule type" value="Genomic_DNA"/>
</dbReference>
<dbReference type="RefSeq" id="WP_011758880.1">
    <property type="nucleotide sequence ID" value="NC_008700.1"/>
</dbReference>
<dbReference type="SMR" id="A1S3L4"/>
<dbReference type="STRING" id="326297.Sama_0763"/>
<dbReference type="KEGG" id="saz:Sama_0763"/>
<dbReference type="eggNOG" id="COG0368">
    <property type="taxonomic scope" value="Bacteria"/>
</dbReference>
<dbReference type="HOGENOM" id="CLU_057426_1_1_6"/>
<dbReference type="OrthoDB" id="9794626at2"/>
<dbReference type="UniPathway" id="UPA00148">
    <property type="reaction ID" value="UER00238"/>
</dbReference>
<dbReference type="Proteomes" id="UP000009175">
    <property type="component" value="Chromosome"/>
</dbReference>
<dbReference type="GO" id="GO:0005886">
    <property type="term" value="C:plasma membrane"/>
    <property type="evidence" value="ECO:0007669"/>
    <property type="project" value="UniProtKB-SubCell"/>
</dbReference>
<dbReference type="GO" id="GO:0051073">
    <property type="term" value="F:adenosylcobinamide-GDP ribazoletransferase activity"/>
    <property type="evidence" value="ECO:0007669"/>
    <property type="project" value="UniProtKB-UniRule"/>
</dbReference>
<dbReference type="GO" id="GO:0008818">
    <property type="term" value="F:cobalamin 5'-phosphate synthase activity"/>
    <property type="evidence" value="ECO:0007669"/>
    <property type="project" value="UniProtKB-UniRule"/>
</dbReference>
<dbReference type="GO" id="GO:0009236">
    <property type="term" value="P:cobalamin biosynthetic process"/>
    <property type="evidence" value="ECO:0007669"/>
    <property type="project" value="UniProtKB-UniRule"/>
</dbReference>
<dbReference type="HAMAP" id="MF_00719">
    <property type="entry name" value="CobS"/>
    <property type="match status" value="1"/>
</dbReference>
<dbReference type="InterPro" id="IPR003805">
    <property type="entry name" value="CobS"/>
</dbReference>
<dbReference type="NCBIfam" id="TIGR00317">
    <property type="entry name" value="cobS"/>
    <property type="match status" value="1"/>
</dbReference>
<dbReference type="NCBIfam" id="NF001277">
    <property type="entry name" value="PRK00235.1-3"/>
    <property type="match status" value="1"/>
</dbReference>
<dbReference type="PANTHER" id="PTHR34148">
    <property type="entry name" value="ADENOSYLCOBINAMIDE-GDP RIBAZOLETRANSFERASE"/>
    <property type="match status" value="1"/>
</dbReference>
<dbReference type="PANTHER" id="PTHR34148:SF1">
    <property type="entry name" value="ADENOSYLCOBINAMIDE-GDP RIBAZOLETRANSFERASE"/>
    <property type="match status" value="1"/>
</dbReference>
<dbReference type="Pfam" id="PF02654">
    <property type="entry name" value="CobS"/>
    <property type="match status" value="1"/>
</dbReference>
<accession>A1S3L4</accession>
<sequence length="260" mass="28240">MSTFKRELELFLLALTFFTRIPVPVKLDYSGEGLNRASRYFGLVGTLVGLIAALVFYLTQFIFPASVAVVLAMIATVLLTGGFHEDGLADTADGFGGAFERERKLEIMKDSRVGSYGSLALMLALLLKFQLLSELALYSVSSVAGGLVLGHTLSRAFAASIIFNHTYVREDAESKAKPLAQSMHWDEVLFLVLSAGVICLLLTGVGATLVILVTLFVARSLLARWQSRHIGGYTGDTLGACQQILELVVYLVLLLLWSQS</sequence>
<proteinExistence type="inferred from homology"/>